<proteinExistence type="evidence at transcript level"/>
<feature type="signal peptide" evidence="2">
    <location>
        <begin position="1"/>
        <end position="26"/>
    </location>
</feature>
<feature type="chain" id="PRO_0000031926" description="Defensin-like protein b">
    <location>
        <begin position="27"/>
        <end position="81"/>
    </location>
</feature>
<feature type="disulfide bond" evidence="1">
    <location>
        <begin position="31"/>
        <end position="81"/>
    </location>
</feature>
<feature type="disulfide bond" evidence="1">
    <location>
        <begin position="42"/>
        <end position="66"/>
    </location>
</feature>
<feature type="disulfide bond" evidence="1">
    <location>
        <begin position="50"/>
        <end position="76"/>
    </location>
</feature>
<feature type="disulfide bond" evidence="1">
    <location>
        <begin position="64"/>
        <end position="78"/>
    </location>
</feature>
<organism>
    <name type="scientific">Arabidopsis lyrata</name>
    <name type="common">Lyre-leaved rock-cress</name>
    <name type="synonym">Arabis lyrata</name>
    <dbReference type="NCBI Taxonomy" id="59689"/>
    <lineage>
        <taxon>Eukaryota</taxon>
        <taxon>Viridiplantae</taxon>
        <taxon>Streptophyta</taxon>
        <taxon>Embryophyta</taxon>
        <taxon>Tracheophyta</taxon>
        <taxon>Spermatophyta</taxon>
        <taxon>Magnoliopsida</taxon>
        <taxon>eudicotyledons</taxon>
        <taxon>Gunneridae</taxon>
        <taxon>Pentapetalae</taxon>
        <taxon>rosids</taxon>
        <taxon>malvids</taxon>
        <taxon>Brassicales</taxon>
        <taxon>Brassicaceae</taxon>
        <taxon>Camelineae</taxon>
        <taxon>Arabidopsis</taxon>
    </lineage>
</organism>
<dbReference type="EMBL" id="AB052754">
    <property type="protein sequence ID" value="BAB40985.1"/>
    <property type="molecule type" value="mRNA"/>
</dbReference>
<dbReference type="SMR" id="Q9AVE2"/>
<dbReference type="GO" id="GO:0005576">
    <property type="term" value="C:extracellular region"/>
    <property type="evidence" value="ECO:0007669"/>
    <property type="project" value="UniProtKB-SubCell"/>
</dbReference>
<dbReference type="GO" id="GO:0060320">
    <property type="term" value="P:rejection of self pollen"/>
    <property type="evidence" value="ECO:0007669"/>
    <property type="project" value="UniProtKB-KW"/>
</dbReference>
<dbReference type="GO" id="GO:0007165">
    <property type="term" value="P:signal transduction"/>
    <property type="evidence" value="ECO:0007669"/>
    <property type="project" value="InterPro"/>
</dbReference>
<dbReference type="InterPro" id="IPR036574">
    <property type="entry name" value="Scorpion_toxin-like_sf"/>
</dbReference>
<dbReference type="InterPro" id="IPR010682">
    <property type="entry name" value="SCRL"/>
</dbReference>
<dbReference type="PANTHER" id="PTHR34450:SF9">
    <property type="entry name" value="DEFENSIN-LIKE PROTEIN 242-RELATED"/>
    <property type="match status" value="1"/>
</dbReference>
<dbReference type="PANTHER" id="PTHR34450">
    <property type="entry name" value="DEFENSIN-LIKE PROTEIN 245-RELATED"/>
    <property type="match status" value="1"/>
</dbReference>
<dbReference type="Pfam" id="PF06876">
    <property type="entry name" value="SCRL"/>
    <property type="match status" value="1"/>
</dbReference>
<dbReference type="SUPFAM" id="SSF57095">
    <property type="entry name" value="Scorpion toxin-like"/>
    <property type="match status" value="1"/>
</dbReference>
<protein>
    <recommendedName>
        <fullName>Defensin-like protein b</fullName>
    </recommendedName>
    <alternativeName>
        <fullName>S locus cysteine-rich-like protein b</fullName>
    </alternativeName>
</protein>
<name>SCRB_ARALY</name>
<evidence type="ECO:0000250" key="1"/>
<evidence type="ECO:0000255" key="2"/>
<evidence type="ECO:0000269" key="3">
    <source>
    </source>
</evidence>
<evidence type="ECO:0000305" key="4"/>
<keyword id="KW-1015">Disulfide bond</keyword>
<keyword id="KW-0964">Secreted</keyword>
<keyword id="KW-0713">Self-incompatibility</keyword>
<keyword id="KW-0732">Signal</keyword>
<sequence length="81" mass="9457">MRNATFFIVFYVFISLVLSNVQDVTAQKNKCMRSEMFPTGPCGNNGEETCKKDFKNIYRTPIQCKCLDKYDFARLCDCRFC</sequence>
<reference key="1">
    <citation type="journal article" date="2001" name="Plant Cell">
        <title>Self-incompatibility in the genus Arabidopsis. Characterization of the S locus in the outcrossing A. lyrata and its autogamous relative A. thaliana.</title>
        <authorList>
            <person name="Kusaba M."/>
            <person name="Dwyer K."/>
            <person name="Hendershot J."/>
            <person name="Vrebalov J."/>
            <person name="Nasrallah J.B."/>
            <person name="Nasrallah M.E."/>
        </authorList>
    </citation>
    <scope>NUCLEOTIDE SEQUENCE [MRNA]</scope>
    <scope>TISSUE SPECIFICITY</scope>
</reference>
<comment type="function">
    <text>Involved in self-incompatibility.</text>
</comment>
<comment type="subcellular location">
    <subcellularLocation>
        <location evidence="1">Secreted</location>
    </subcellularLocation>
</comment>
<comment type="tissue specificity">
    <text evidence="3">Expressed in microspores and in young and mature anthers.</text>
</comment>
<comment type="miscellaneous">
    <text>The two genes are located within a perfect direct repeat and probably exhibit identical expression patterns.</text>
</comment>
<comment type="similarity">
    <text evidence="4">Belongs to the DEFL family.</text>
</comment>
<gene>
    <name type="primary">SCRb-1</name>
</gene>
<gene>
    <name type="primary">SCRb-2</name>
</gene>
<accession>Q9AVE2</accession>